<gene>
    <name evidence="1" type="primary">eif6</name>
    <name type="ordered locus">MA_4112</name>
</gene>
<organism>
    <name type="scientific">Methanosarcina acetivorans (strain ATCC 35395 / DSM 2834 / JCM 12185 / C2A)</name>
    <dbReference type="NCBI Taxonomy" id="188937"/>
    <lineage>
        <taxon>Archaea</taxon>
        <taxon>Methanobacteriati</taxon>
        <taxon>Methanobacteriota</taxon>
        <taxon>Stenosarchaea group</taxon>
        <taxon>Methanomicrobia</taxon>
        <taxon>Methanosarcinales</taxon>
        <taxon>Methanosarcinaceae</taxon>
        <taxon>Methanosarcina</taxon>
    </lineage>
</organism>
<dbReference type="EMBL" id="AE010299">
    <property type="protein sequence ID" value="AAM07460.1"/>
    <property type="molecule type" value="Genomic_DNA"/>
</dbReference>
<dbReference type="RefSeq" id="WP_011024003.1">
    <property type="nucleotide sequence ID" value="NC_003552.1"/>
</dbReference>
<dbReference type="SMR" id="Q8TIN4"/>
<dbReference type="FunCoup" id="Q8TIN4">
    <property type="interactions" value="164"/>
</dbReference>
<dbReference type="STRING" id="188937.MA_4112"/>
<dbReference type="EnsemblBacteria" id="AAM07460">
    <property type="protein sequence ID" value="AAM07460"/>
    <property type="gene ID" value="MA_4112"/>
</dbReference>
<dbReference type="GeneID" id="1476006"/>
<dbReference type="KEGG" id="mac:MA_4112"/>
<dbReference type="HOGENOM" id="CLU_071894_1_0_2"/>
<dbReference type="InParanoid" id="Q8TIN4"/>
<dbReference type="OrthoDB" id="33582at2157"/>
<dbReference type="PhylomeDB" id="Q8TIN4"/>
<dbReference type="Proteomes" id="UP000002487">
    <property type="component" value="Chromosome"/>
</dbReference>
<dbReference type="GO" id="GO:0005829">
    <property type="term" value="C:cytosol"/>
    <property type="evidence" value="ECO:0000318"/>
    <property type="project" value="GO_Central"/>
</dbReference>
<dbReference type="GO" id="GO:0043022">
    <property type="term" value="F:ribosome binding"/>
    <property type="evidence" value="ECO:0007669"/>
    <property type="project" value="InterPro"/>
</dbReference>
<dbReference type="GO" id="GO:0003743">
    <property type="term" value="F:translation initiation factor activity"/>
    <property type="evidence" value="ECO:0007669"/>
    <property type="project" value="UniProtKB-UniRule"/>
</dbReference>
<dbReference type="GO" id="GO:1902626">
    <property type="term" value="P:assembly of large subunit precursor of preribosome"/>
    <property type="evidence" value="ECO:0000318"/>
    <property type="project" value="GO_Central"/>
</dbReference>
<dbReference type="GO" id="GO:0042256">
    <property type="term" value="P:cytosolic ribosome assembly"/>
    <property type="evidence" value="ECO:0007669"/>
    <property type="project" value="InterPro"/>
</dbReference>
<dbReference type="GO" id="GO:0000460">
    <property type="term" value="P:maturation of 5.8S rRNA"/>
    <property type="evidence" value="ECO:0000318"/>
    <property type="project" value="GO_Central"/>
</dbReference>
<dbReference type="GO" id="GO:0000470">
    <property type="term" value="P:maturation of LSU-rRNA"/>
    <property type="evidence" value="ECO:0000318"/>
    <property type="project" value="GO_Central"/>
</dbReference>
<dbReference type="CDD" id="cd00527">
    <property type="entry name" value="IF6"/>
    <property type="match status" value="1"/>
</dbReference>
<dbReference type="Gene3D" id="3.75.10.10">
    <property type="entry name" value="L-arginine/glycine Amidinotransferase, Chain A"/>
    <property type="match status" value="1"/>
</dbReference>
<dbReference type="HAMAP" id="MF_00032">
    <property type="entry name" value="eIF_6"/>
    <property type="match status" value="1"/>
</dbReference>
<dbReference type="InterPro" id="IPR002769">
    <property type="entry name" value="eIF6"/>
</dbReference>
<dbReference type="NCBIfam" id="TIGR00323">
    <property type="entry name" value="eIF-6"/>
    <property type="match status" value="1"/>
</dbReference>
<dbReference type="NCBIfam" id="NF003130">
    <property type="entry name" value="PRK04046.2-1"/>
    <property type="match status" value="1"/>
</dbReference>
<dbReference type="PANTHER" id="PTHR10784">
    <property type="entry name" value="TRANSLATION INITIATION FACTOR 6"/>
    <property type="match status" value="1"/>
</dbReference>
<dbReference type="Pfam" id="PF01912">
    <property type="entry name" value="eIF-6"/>
    <property type="match status" value="1"/>
</dbReference>
<dbReference type="PIRSF" id="PIRSF006413">
    <property type="entry name" value="IF-6"/>
    <property type="match status" value="1"/>
</dbReference>
<dbReference type="SMART" id="SM00654">
    <property type="entry name" value="eIF6"/>
    <property type="match status" value="1"/>
</dbReference>
<dbReference type="SUPFAM" id="SSF55909">
    <property type="entry name" value="Pentein"/>
    <property type="match status" value="1"/>
</dbReference>
<reference key="1">
    <citation type="journal article" date="2002" name="Genome Res.">
        <title>The genome of Methanosarcina acetivorans reveals extensive metabolic and physiological diversity.</title>
        <authorList>
            <person name="Galagan J.E."/>
            <person name="Nusbaum C."/>
            <person name="Roy A."/>
            <person name="Endrizzi M.G."/>
            <person name="Macdonald P."/>
            <person name="FitzHugh W."/>
            <person name="Calvo S."/>
            <person name="Engels R."/>
            <person name="Smirnov S."/>
            <person name="Atnoor D."/>
            <person name="Brown A."/>
            <person name="Allen N."/>
            <person name="Naylor J."/>
            <person name="Stange-Thomann N."/>
            <person name="DeArellano K."/>
            <person name="Johnson R."/>
            <person name="Linton L."/>
            <person name="McEwan P."/>
            <person name="McKernan K."/>
            <person name="Talamas J."/>
            <person name="Tirrell A."/>
            <person name="Ye W."/>
            <person name="Zimmer A."/>
            <person name="Barber R.D."/>
            <person name="Cann I."/>
            <person name="Graham D.E."/>
            <person name="Grahame D.A."/>
            <person name="Guss A.M."/>
            <person name="Hedderich R."/>
            <person name="Ingram-Smith C."/>
            <person name="Kuettner H.C."/>
            <person name="Krzycki J.A."/>
            <person name="Leigh J.A."/>
            <person name="Li W."/>
            <person name="Liu J."/>
            <person name="Mukhopadhyay B."/>
            <person name="Reeve J.N."/>
            <person name="Smith K."/>
            <person name="Springer T.A."/>
            <person name="Umayam L.A."/>
            <person name="White O."/>
            <person name="White R.H."/>
            <person name="de Macario E.C."/>
            <person name="Ferry J.G."/>
            <person name="Jarrell K.F."/>
            <person name="Jing H."/>
            <person name="Macario A.J.L."/>
            <person name="Paulsen I.T."/>
            <person name="Pritchett M."/>
            <person name="Sowers K.R."/>
            <person name="Swanson R.V."/>
            <person name="Zinder S.H."/>
            <person name="Lander E."/>
            <person name="Metcalf W.W."/>
            <person name="Birren B."/>
        </authorList>
    </citation>
    <scope>NUCLEOTIDE SEQUENCE [LARGE SCALE GENOMIC DNA]</scope>
    <source>
        <strain>ATCC 35395 / DSM 2834 / JCM 12185 / C2A</strain>
    </source>
</reference>
<accession>Q8TIN4</accession>
<proteinExistence type="inferred from homology"/>
<name>IF6_METAC</name>
<comment type="function">
    <text evidence="1">Binds to the 50S ribosomal subunit and prevents its association with the 30S ribosomal subunit to form the 70S initiation complex.</text>
</comment>
<comment type="similarity">
    <text evidence="1">Belongs to the eIF-6 family.</text>
</comment>
<protein>
    <recommendedName>
        <fullName evidence="1">Translation initiation factor 6</fullName>
        <shortName evidence="1">aIF-6</shortName>
    </recommendedName>
</protein>
<feature type="chain" id="PRO_0000153745" description="Translation initiation factor 6">
    <location>
        <begin position="1"/>
        <end position="218"/>
    </location>
</feature>
<evidence type="ECO:0000255" key="1">
    <source>
        <dbReference type="HAMAP-Rule" id="MF_00032"/>
    </source>
</evidence>
<sequence>MIRTVDIYDTSIIGVFATCTEDVVLVPPLTKPEVCALLEEVLDVRVIETLVNGSIVVGALSRGNSNGFMLPYGARAEMQRFTDIPVGILPDRLNAVGNIVFANDSAALVHPDLSDKALEAIARTLKVDVYRGTIAGIKNVGMAGVVTNKGLLVHPKVTASEREVLEKIFGFPVNIGTTNFGTQMLGSGLLANSKNFVAGSETTGPELGRIEEALGFLE</sequence>
<keyword id="KW-0396">Initiation factor</keyword>
<keyword id="KW-0648">Protein biosynthesis</keyword>
<keyword id="KW-1185">Reference proteome</keyword>